<reference key="1">
    <citation type="submission" date="2007-06" db="EMBL/GenBank/DDBJ databases">
        <title>Complete sequence of Marinomonas sp. MWYL1.</title>
        <authorList>
            <consortium name="US DOE Joint Genome Institute"/>
            <person name="Copeland A."/>
            <person name="Lucas S."/>
            <person name="Lapidus A."/>
            <person name="Barry K."/>
            <person name="Glavina del Rio T."/>
            <person name="Dalin E."/>
            <person name="Tice H."/>
            <person name="Pitluck S."/>
            <person name="Kiss H."/>
            <person name="Brettin T."/>
            <person name="Bruce D."/>
            <person name="Detter J.C."/>
            <person name="Han C."/>
            <person name="Schmutz J."/>
            <person name="Larimer F."/>
            <person name="Land M."/>
            <person name="Hauser L."/>
            <person name="Kyrpides N."/>
            <person name="Kim E."/>
            <person name="Johnston A.W.B."/>
            <person name="Todd J.D."/>
            <person name="Rogers R."/>
            <person name="Wexler M."/>
            <person name="Bond P.L."/>
            <person name="Li Y."/>
            <person name="Richardson P."/>
        </authorList>
    </citation>
    <scope>NUCLEOTIDE SEQUENCE [LARGE SCALE GENOMIC DNA]</scope>
    <source>
        <strain>MWYL1</strain>
    </source>
</reference>
<sequence>MGIESPTASSYIKHHLQNLTYGQHPDGTWGLAHDAKEAADMGFWAIHVDTMAISIALGFLFLWLFRKAAKKISADTPSGLQNFVELMVEFVDGSVKETFHGKSKVIAPLALTIFVWVFLMNFMDLIPVDFLPATAQWIGVTLFGADPHHVYFKFVPTTDINATLGMSLSVFVLIVFYSIKVKGISGFVGELTLQPFGKWMIPFNLLLEGVGLLAKPVSLALRLFGNLYAGELIFILIAILPWGVQWALSVPWAIFHILIIVLQAFIFMMLTIVYLSMAHENH</sequence>
<protein>
    <recommendedName>
        <fullName evidence="1">ATP synthase subunit a</fullName>
    </recommendedName>
    <alternativeName>
        <fullName evidence="1">ATP synthase F0 sector subunit a</fullName>
    </alternativeName>
    <alternativeName>
        <fullName evidence="1">F-ATPase subunit 6</fullName>
    </alternativeName>
</protein>
<accession>A6W3T4</accession>
<name>ATP6_MARMS</name>
<evidence type="ECO:0000255" key="1">
    <source>
        <dbReference type="HAMAP-Rule" id="MF_01393"/>
    </source>
</evidence>
<dbReference type="EMBL" id="CP000749">
    <property type="protein sequence ID" value="ABR73363.1"/>
    <property type="molecule type" value="Genomic_DNA"/>
</dbReference>
<dbReference type="SMR" id="A6W3T4"/>
<dbReference type="STRING" id="400668.Mmwyl1_4468"/>
<dbReference type="KEGG" id="mmw:Mmwyl1_4468"/>
<dbReference type="eggNOG" id="COG0356">
    <property type="taxonomic scope" value="Bacteria"/>
</dbReference>
<dbReference type="HOGENOM" id="CLU_041018_1_0_6"/>
<dbReference type="OrthoDB" id="9789241at2"/>
<dbReference type="GO" id="GO:0005886">
    <property type="term" value="C:plasma membrane"/>
    <property type="evidence" value="ECO:0007669"/>
    <property type="project" value="UniProtKB-SubCell"/>
</dbReference>
<dbReference type="GO" id="GO:0045259">
    <property type="term" value="C:proton-transporting ATP synthase complex"/>
    <property type="evidence" value="ECO:0007669"/>
    <property type="project" value="UniProtKB-KW"/>
</dbReference>
<dbReference type="GO" id="GO:0046933">
    <property type="term" value="F:proton-transporting ATP synthase activity, rotational mechanism"/>
    <property type="evidence" value="ECO:0007669"/>
    <property type="project" value="UniProtKB-UniRule"/>
</dbReference>
<dbReference type="GO" id="GO:0042777">
    <property type="term" value="P:proton motive force-driven plasma membrane ATP synthesis"/>
    <property type="evidence" value="ECO:0007669"/>
    <property type="project" value="TreeGrafter"/>
</dbReference>
<dbReference type="CDD" id="cd00310">
    <property type="entry name" value="ATP-synt_Fo_a_6"/>
    <property type="match status" value="1"/>
</dbReference>
<dbReference type="FunFam" id="1.20.120.220:FF:000002">
    <property type="entry name" value="ATP synthase subunit a"/>
    <property type="match status" value="1"/>
</dbReference>
<dbReference type="Gene3D" id="1.20.120.220">
    <property type="entry name" value="ATP synthase, F0 complex, subunit A"/>
    <property type="match status" value="1"/>
</dbReference>
<dbReference type="HAMAP" id="MF_01393">
    <property type="entry name" value="ATP_synth_a_bact"/>
    <property type="match status" value="1"/>
</dbReference>
<dbReference type="InterPro" id="IPR045082">
    <property type="entry name" value="ATP_syn_F0_a_bact/chloroplast"/>
</dbReference>
<dbReference type="InterPro" id="IPR000568">
    <property type="entry name" value="ATP_synth_F0_asu"/>
</dbReference>
<dbReference type="InterPro" id="IPR023011">
    <property type="entry name" value="ATP_synth_F0_asu_AS"/>
</dbReference>
<dbReference type="InterPro" id="IPR035908">
    <property type="entry name" value="F0_ATP_A_sf"/>
</dbReference>
<dbReference type="NCBIfam" id="TIGR01131">
    <property type="entry name" value="ATP_synt_6_or_A"/>
    <property type="match status" value="1"/>
</dbReference>
<dbReference type="NCBIfam" id="NF004477">
    <property type="entry name" value="PRK05815.1-1"/>
    <property type="match status" value="1"/>
</dbReference>
<dbReference type="PANTHER" id="PTHR42823">
    <property type="entry name" value="ATP SYNTHASE SUBUNIT A, CHLOROPLASTIC"/>
    <property type="match status" value="1"/>
</dbReference>
<dbReference type="PANTHER" id="PTHR42823:SF3">
    <property type="entry name" value="ATP SYNTHASE SUBUNIT A, CHLOROPLASTIC"/>
    <property type="match status" value="1"/>
</dbReference>
<dbReference type="Pfam" id="PF00119">
    <property type="entry name" value="ATP-synt_A"/>
    <property type="match status" value="1"/>
</dbReference>
<dbReference type="SUPFAM" id="SSF81336">
    <property type="entry name" value="F1F0 ATP synthase subunit A"/>
    <property type="match status" value="1"/>
</dbReference>
<dbReference type="PROSITE" id="PS00449">
    <property type="entry name" value="ATPASE_A"/>
    <property type="match status" value="1"/>
</dbReference>
<keyword id="KW-0066">ATP synthesis</keyword>
<keyword id="KW-0997">Cell inner membrane</keyword>
<keyword id="KW-1003">Cell membrane</keyword>
<keyword id="KW-0138">CF(0)</keyword>
<keyword id="KW-0375">Hydrogen ion transport</keyword>
<keyword id="KW-0406">Ion transport</keyword>
<keyword id="KW-0472">Membrane</keyword>
<keyword id="KW-0812">Transmembrane</keyword>
<keyword id="KW-1133">Transmembrane helix</keyword>
<keyword id="KW-0813">Transport</keyword>
<proteinExistence type="inferred from homology"/>
<gene>
    <name evidence="1" type="primary">atpB</name>
    <name type="ordered locus">Mmwyl1_4468</name>
</gene>
<organism>
    <name type="scientific">Marinomonas sp. (strain MWYL1)</name>
    <dbReference type="NCBI Taxonomy" id="400668"/>
    <lineage>
        <taxon>Bacteria</taxon>
        <taxon>Pseudomonadati</taxon>
        <taxon>Pseudomonadota</taxon>
        <taxon>Gammaproteobacteria</taxon>
        <taxon>Oceanospirillales</taxon>
        <taxon>Oceanospirillaceae</taxon>
        <taxon>Marinomonas</taxon>
    </lineage>
</organism>
<feature type="chain" id="PRO_0000362344" description="ATP synthase subunit a">
    <location>
        <begin position="1"/>
        <end position="282"/>
    </location>
</feature>
<feature type="transmembrane region" description="Helical" evidence="1">
    <location>
        <begin position="45"/>
        <end position="65"/>
    </location>
</feature>
<feature type="transmembrane region" description="Helical" evidence="1">
    <location>
        <begin position="106"/>
        <end position="126"/>
    </location>
</feature>
<feature type="transmembrane region" description="Helical" evidence="1">
    <location>
        <begin position="160"/>
        <end position="179"/>
    </location>
</feature>
<feature type="transmembrane region" description="Helical" evidence="1">
    <location>
        <begin position="232"/>
        <end position="252"/>
    </location>
</feature>
<feature type="transmembrane region" description="Helical" evidence="1">
    <location>
        <begin position="253"/>
        <end position="273"/>
    </location>
</feature>
<comment type="function">
    <text evidence="1">Key component of the proton channel; it plays a direct role in the translocation of protons across the membrane.</text>
</comment>
<comment type="subunit">
    <text evidence="1">F-type ATPases have 2 components, CF(1) - the catalytic core - and CF(0) - the membrane proton channel. CF(1) has five subunits: alpha(3), beta(3), gamma(1), delta(1), epsilon(1). CF(0) has three main subunits: a(1), b(2) and c(9-12). The alpha and beta chains form an alternating ring which encloses part of the gamma chain. CF(1) is attached to CF(0) by a central stalk formed by the gamma and epsilon chains, while a peripheral stalk is formed by the delta and b chains.</text>
</comment>
<comment type="subcellular location">
    <subcellularLocation>
        <location evidence="1">Cell inner membrane</location>
        <topology evidence="1">Multi-pass membrane protein</topology>
    </subcellularLocation>
</comment>
<comment type="similarity">
    <text evidence="1">Belongs to the ATPase A chain family.</text>
</comment>